<sequence>MAKVKGGLGRGLDSLLANGADNSSGDRLTTVAVKDIRPGRYQARVQIDDEALQELADSIKAQGVIQPVIVREHGLSRYELIAGERRWRAAQIAGLTEIPAVIKTISDETALAMGLIENLQRENLNPIEEAQGLKRLADEFGLTHETIAQAVGKSRSAISNSLRLLSLPEPVQEMLYQRRLEMGHARALLTLPVVEQLELAQKAVKNGWSVREVERRSQAALQNKRPEPKKTAAADIGRLNDLLTEKLGVNAEVKTANHKKGRIVLYFDTPETFGHLLEQLGIDYRP</sequence>
<gene>
    <name type="primary">parB</name>
    <name type="ordered locus">NMB1944</name>
</gene>
<proteinExistence type="inferred from homology"/>
<keyword id="KW-0159">Chromosome partition</keyword>
<keyword id="KW-0238">DNA-binding</keyword>
<keyword id="KW-1185">Reference proteome</keyword>
<feature type="chain" id="PRO_0000178688" description="Probable chromosome-partitioning protein ParB">
    <location>
        <begin position="1"/>
        <end position="286"/>
    </location>
</feature>
<accession>Q9JXP5</accession>
<evidence type="ECO:0000250" key="1"/>
<evidence type="ECO:0000305" key="2"/>
<name>PARB_NEIMB</name>
<dbReference type="EMBL" id="AE002098">
    <property type="protein sequence ID" value="AAF42273.1"/>
    <property type="molecule type" value="Genomic_DNA"/>
</dbReference>
<dbReference type="PIR" id="A81026">
    <property type="entry name" value="A81026"/>
</dbReference>
<dbReference type="RefSeq" id="NP_274938.1">
    <property type="nucleotide sequence ID" value="NC_003112.2"/>
</dbReference>
<dbReference type="RefSeq" id="WP_002223092.1">
    <property type="nucleotide sequence ID" value="NC_003112.2"/>
</dbReference>
<dbReference type="SMR" id="Q9JXP5"/>
<dbReference type="STRING" id="122586.NMB1944"/>
<dbReference type="PaxDb" id="122586-NMB1944"/>
<dbReference type="KEGG" id="nme:NMB1944"/>
<dbReference type="PATRIC" id="fig|122586.8.peg.2473"/>
<dbReference type="HOGENOM" id="CLU_023853_0_1_4"/>
<dbReference type="InParanoid" id="Q9JXP5"/>
<dbReference type="OrthoDB" id="9802051at2"/>
<dbReference type="Proteomes" id="UP000000425">
    <property type="component" value="Chromosome"/>
</dbReference>
<dbReference type="GO" id="GO:0005694">
    <property type="term" value="C:chromosome"/>
    <property type="evidence" value="ECO:0000318"/>
    <property type="project" value="GO_Central"/>
</dbReference>
<dbReference type="GO" id="GO:0003677">
    <property type="term" value="F:DNA binding"/>
    <property type="evidence" value="ECO:0007669"/>
    <property type="project" value="UniProtKB-KW"/>
</dbReference>
<dbReference type="GO" id="GO:0007059">
    <property type="term" value="P:chromosome segregation"/>
    <property type="evidence" value="ECO:0000318"/>
    <property type="project" value="GO_Central"/>
</dbReference>
<dbReference type="GO" id="GO:0045881">
    <property type="term" value="P:positive regulation of sporulation resulting in formation of a cellular spore"/>
    <property type="evidence" value="ECO:0000318"/>
    <property type="project" value="GO_Central"/>
</dbReference>
<dbReference type="CDD" id="cd16393">
    <property type="entry name" value="SPO0J_N"/>
    <property type="match status" value="1"/>
</dbReference>
<dbReference type="FunFam" id="1.10.10.2830:FF:000001">
    <property type="entry name" value="Chromosome partitioning protein ParB"/>
    <property type="match status" value="1"/>
</dbReference>
<dbReference type="FunFam" id="3.90.1530.30:FF:000001">
    <property type="entry name" value="Chromosome partitioning protein ParB"/>
    <property type="match status" value="1"/>
</dbReference>
<dbReference type="Gene3D" id="1.10.10.2830">
    <property type="match status" value="1"/>
</dbReference>
<dbReference type="Gene3D" id="3.90.1530.30">
    <property type="match status" value="1"/>
</dbReference>
<dbReference type="InterPro" id="IPR050336">
    <property type="entry name" value="Chromosome_partition/occlusion"/>
</dbReference>
<dbReference type="InterPro" id="IPR041468">
    <property type="entry name" value="HTH_ParB/Spo0J"/>
</dbReference>
<dbReference type="InterPro" id="IPR004437">
    <property type="entry name" value="ParB/RepB/Spo0J"/>
</dbReference>
<dbReference type="InterPro" id="IPR003115">
    <property type="entry name" value="ParB/Sulfiredoxin_dom"/>
</dbReference>
<dbReference type="InterPro" id="IPR036086">
    <property type="entry name" value="ParB/Sulfiredoxin_sf"/>
</dbReference>
<dbReference type="InterPro" id="IPR057240">
    <property type="entry name" value="ParB_dimer_C"/>
</dbReference>
<dbReference type="NCBIfam" id="TIGR00180">
    <property type="entry name" value="parB_part"/>
    <property type="match status" value="1"/>
</dbReference>
<dbReference type="PANTHER" id="PTHR33375">
    <property type="entry name" value="CHROMOSOME-PARTITIONING PROTEIN PARB-RELATED"/>
    <property type="match status" value="1"/>
</dbReference>
<dbReference type="PANTHER" id="PTHR33375:SF1">
    <property type="entry name" value="CHROMOSOME-PARTITIONING PROTEIN PARB-RELATED"/>
    <property type="match status" value="1"/>
</dbReference>
<dbReference type="Pfam" id="PF17762">
    <property type="entry name" value="HTH_ParB"/>
    <property type="match status" value="1"/>
</dbReference>
<dbReference type="Pfam" id="PF23552">
    <property type="entry name" value="ParB_dimer"/>
    <property type="match status" value="1"/>
</dbReference>
<dbReference type="Pfam" id="PF02195">
    <property type="entry name" value="ParBc"/>
    <property type="match status" value="1"/>
</dbReference>
<dbReference type="SMART" id="SM00470">
    <property type="entry name" value="ParB"/>
    <property type="match status" value="1"/>
</dbReference>
<dbReference type="SUPFAM" id="SSF109709">
    <property type="entry name" value="KorB DNA-binding domain-like"/>
    <property type="match status" value="1"/>
</dbReference>
<dbReference type="SUPFAM" id="SSF110849">
    <property type="entry name" value="ParB/Sulfiredoxin"/>
    <property type="match status" value="1"/>
</dbReference>
<organism>
    <name type="scientific">Neisseria meningitidis serogroup B (strain ATCC BAA-335 / MC58)</name>
    <dbReference type="NCBI Taxonomy" id="122586"/>
    <lineage>
        <taxon>Bacteria</taxon>
        <taxon>Pseudomonadati</taxon>
        <taxon>Pseudomonadota</taxon>
        <taxon>Betaproteobacteria</taxon>
        <taxon>Neisseriales</taxon>
        <taxon>Neisseriaceae</taxon>
        <taxon>Neisseria</taxon>
    </lineage>
</organism>
<reference key="1">
    <citation type="journal article" date="2000" name="Science">
        <title>Complete genome sequence of Neisseria meningitidis serogroup B strain MC58.</title>
        <authorList>
            <person name="Tettelin H."/>
            <person name="Saunders N.J."/>
            <person name="Heidelberg J.F."/>
            <person name="Jeffries A.C."/>
            <person name="Nelson K.E."/>
            <person name="Eisen J.A."/>
            <person name="Ketchum K.A."/>
            <person name="Hood D.W."/>
            <person name="Peden J.F."/>
            <person name="Dodson R.J."/>
            <person name="Nelson W.C."/>
            <person name="Gwinn M.L."/>
            <person name="DeBoy R.T."/>
            <person name="Peterson J.D."/>
            <person name="Hickey E.K."/>
            <person name="Haft D.H."/>
            <person name="Salzberg S.L."/>
            <person name="White O."/>
            <person name="Fleischmann R.D."/>
            <person name="Dougherty B.A."/>
            <person name="Mason T.M."/>
            <person name="Ciecko A."/>
            <person name="Parksey D.S."/>
            <person name="Blair E."/>
            <person name="Cittone H."/>
            <person name="Clark E.B."/>
            <person name="Cotton M.D."/>
            <person name="Utterback T.R."/>
            <person name="Khouri H.M."/>
            <person name="Qin H."/>
            <person name="Vamathevan J.J."/>
            <person name="Gill J."/>
            <person name="Scarlato V."/>
            <person name="Masignani V."/>
            <person name="Pizza M."/>
            <person name="Grandi G."/>
            <person name="Sun L."/>
            <person name="Smith H.O."/>
            <person name="Fraser C.M."/>
            <person name="Moxon E.R."/>
            <person name="Rappuoli R."/>
            <person name="Venter J.C."/>
        </authorList>
    </citation>
    <scope>NUCLEOTIDE SEQUENCE [LARGE SCALE GENOMIC DNA]</scope>
    <source>
        <strain>ATCC BAA-335 / MC58</strain>
    </source>
</reference>
<protein>
    <recommendedName>
        <fullName>Probable chromosome-partitioning protein ParB</fullName>
    </recommendedName>
</protein>
<comment type="function">
    <text evidence="1">Involved in chromosome partition. Localize to both poles of the predivisional cell following completion of DNA replication. Binds to the DNA origin of replication (By similarity).</text>
</comment>
<comment type="similarity">
    <text evidence="2">Belongs to the ParB family.</text>
</comment>